<keyword id="KW-1185">Reference proteome</keyword>
<keyword id="KW-0687">Ribonucleoprotein</keyword>
<keyword id="KW-0689">Ribosomal protein</keyword>
<keyword id="KW-0694">RNA-binding</keyword>
<keyword id="KW-0699">rRNA-binding</keyword>
<comment type="function">
    <text evidence="1">Binds directly to 23S ribosomal RNA and is necessary for the in vitro assembly process of the 50S ribosomal subunit. It is not involved in the protein synthesizing functions of that subunit.</text>
</comment>
<comment type="similarity">
    <text evidence="1">Belongs to the bacterial ribosomal protein bL20 family.</text>
</comment>
<protein>
    <recommendedName>
        <fullName evidence="1">Large ribosomal subunit protein bL20</fullName>
    </recommendedName>
    <alternativeName>
        <fullName evidence="2">50S ribosomal protein L20</fullName>
    </alternativeName>
</protein>
<accession>B3E1T8</accession>
<name>RL20_TRIL1</name>
<organism>
    <name type="scientific">Trichlorobacter lovleyi (strain ATCC BAA-1151 / DSM 17278 / SZ)</name>
    <name type="common">Geobacter lovleyi</name>
    <dbReference type="NCBI Taxonomy" id="398767"/>
    <lineage>
        <taxon>Bacteria</taxon>
        <taxon>Pseudomonadati</taxon>
        <taxon>Thermodesulfobacteriota</taxon>
        <taxon>Desulfuromonadia</taxon>
        <taxon>Geobacterales</taxon>
        <taxon>Geobacteraceae</taxon>
        <taxon>Trichlorobacter</taxon>
    </lineage>
</organism>
<proteinExistence type="inferred from homology"/>
<reference key="1">
    <citation type="submission" date="2008-05" db="EMBL/GenBank/DDBJ databases">
        <title>Complete sequence of chromosome of Geobacter lovleyi SZ.</title>
        <authorList>
            <consortium name="US DOE Joint Genome Institute"/>
            <person name="Lucas S."/>
            <person name="Copeland A."/>
            <person name="Lapidus A."/>
            <person name="Glavina del Rio T."/>
            <person name="Dalin E."/>
            <person name="Tice H."/>
            <person name="Bruce D."/>
            <person name="Goodwin L."/>
            <person name="Pitluck S."/>
            <person name="Chertkov O."/>
            <person name="Meincke L."/>
            <person name="Brettin T."/>
            <person name="Detter J.C."/>
            <person name="Han C."/>
            <person name="Tapia R."/>
            <person name="Kuske C.R."/>
            <person name="Schmutz J."/>
            <person name="Larimer F."/>
            <person name="Land M."/>
            <person name="Hauser L."/>
            <person name="Kyrpides N."/>
            <person name="Mikhailova N."/>
            <person name="Sung Y."/>
            <person name="Fletcher K.E."/>
            <person name="Ritalahti K.M."/>
            <person name="Loeffler F.E."/>
            <person name="Richardson P."/>
        </authorList>
    </citation>
    <scope>NUCLEOTIDE SEQUENCE [LARGE SCALE GENOMIC DNA]</scope>
    <source>
        <strain>ATCC BAA-1151 / DSM 17278 / SZ</strain>
    </source>
</reference>
<evidence type="ECO:0000255" key="1">
    <source>
        <dbReference type="HAMAP-Rule" id="MF_00382"/>
    </source>
</evidence>
<evidence type="ECO:0000305" key="2"/>
<dbReference type="EMBL" id="CP001089">
    <property type="protein sequence ID" value="ACD95588.1"/>
    <property type="molecule type" value="Genomic_DNA"/>
</dbReference>
<dbReference type="RefSeq" id="WP_012469927.1">
    <property type="nucleotide sequence ID" value="NC_010814.1"/>
</dbReference>
<dbReference type="SMR" id="B3E1T8"/>
<dbReference type="STRING" id="398767.Glov_1872"/>
<dbReference type="KEGG" id="glo:Glov_1872"/>
<dbReference type="eggNOG" id="COG0292">
    <property type="taxonomic scope" value="Bacteria"/>
</dbReference>
<dbReference type="HOGENOM" id="CLU_123265_0_1_7"/>
<dbReference type="OrthoDB" id="9808966at2"/>
<dbReference type="Proteomes" id="UP000002420">
    <property type="component" value="Chromosome"/>
</dbReference>
<dbReference type="GO" id="GO:1990904">
    <property type="term" value="C:ribonucleoprotein complex"/>
    <property type="evidence" value="ECO:0007669"/>
    <property type="project" value="UniProtKB-KW"/>
</dbReference>
<dbReference type="GO" id="GO:0005840">
    <property type="term" value="C:ribosome"/>
    <property type="evidence" value="ECO:0007669"/>
    <property type="project" value="UniProtKB-KW"/>
</dbReference>
<dbReference type="GO" id="GO:0019843">
    <property type="term" value="F:rRNA binding"/>
    <property type="evidence" value="ECO:0007669"/>
    <property type="project" value="UniProtKB-UniRule"/>
</dbReference>
<dbReference type="GO" id="GO:0003735">
    <property type="term" value="F:structural constituent of ribosome"/>
    <property type="evidence" value="ECO:0007669"/>
    <property type="project" value="InterPro"/>
</dbReference>
<dbReference type="GO" id="GO:0000027">
    <property type="term" value="P:ribosomal large subunit assembly"/>
    <property type="evidence" value="ECO:0007669"/>
    <property type="project" value="UniProtKB-UniRule"/>
</dbReference>
<dbReference type="GO" id="GO:0006412">
    <property type="term" value="P:translation"/>
    <property type="evidence" value="ECO:0007669"/>
    <property type="project" value="InterPro"/>
</dbReference>
<dbReference type="CDD" id="cd07026">
    <property type="entry name" value="Ribosomal_L20"/>
    <property type="match status" value="1"/>
</dbReference>
<dbReference type="FunFam" id="1.10.1900.20:FF:000001">
    <property type="entry name" value="50S ribosomal protein L20"/>
    <property type="match status" value="1"/>
</dbReference>
<dbReference type="Gene3D" id="6.10.160.10">
    <property type="match status" value="1"/>
</dbReference>
<dbReference type="Gene3D" id="1.10.1900.20">
    <property type="entry name" value="Ribosomal protein L20"/>
    <property type="match status" value="1"/>
</dbReference>
<dbReference type="HAMAP" id="MF_00382">
    <property type="entry name" value="Ribosomal_bL20"/>
    <property type="match status" value="1"/>
</dbReference>
<dbReference type="InterPro" id="IPR005813">
    <property type="entry name" value="Ribosomal_bL20"/>
</dbReference>
<dbReference type="InterPro" id="IPR049946">
    <property type="entry name" value="RIBOSOMAL_L20_CS"/>
</dbReference>
<dbReference type="InterPro" id="IPR035566">
    <property type="entry name" value="Ribosomal_protein_bL20_C"/>
</dbReference>
<dbReference type="NCBIfam" id="TIGR01032">
    <property type="entry name" value="rplT_bact"/>
    <property type="match status" value="1"/>
</dbReference>
<dbReference type="PANTHER" id="PTHR10986">
    <property type="entry name" value="39S RIBOSOMAL PROTEIN L20"/>
    <property type="match status" value="1"/>
</dbReference>
<dbReference type="Pfam" id="PF00453">
    <property type="entry name" value="Ribosomal_L20"/>
    <property type="match status" value="1"/>
</dbReference>
<dbReference type="PRINTS" id="PR00062">
    <property type="entry name" value="RIBOSOMALL20"/>
</dbReference>
<dbReference type="SUPFAM" id="SSF74731">
    <property type="entry name" value="Ribosomal protein L20"/>
    <property type="match status" value="1"/>
</dbReference>
<dbReference type="PROSITE" id="PS00937">
    <property type="entry name" value="RIBOSOMAL_L20"/>
    <property type="match status" value="1"/>
</dbReference>
<feature type="chain" id="PRO_1000122322" description="Large ribosomal subunit protein bL20">
    <location>
        <begin position="1"/>
        <end position="117"/>
    </location>
</feature>
<sequence length="117" mass="13333">MPRAKGGFKSRQRRNKVLKLAKGYRGARSKLFRSATEAVDRALNYAFRDRRVKKRDFRSLWIMRINAASRLNGLSYSKFIFGLKKADVQIDRKVLADIAITDPKGFAEISAVAKAQL</sequence>
<gene>
    <name evidence="1" type="primary">rplT</name>
    <name type="ordered locus">Glov_1872</name>
</gene>